<feature type="peptide" id="PRO_0000043850" description="Uperin-2.5">
    <location>
        <begin position="1"/>
        <end position="19"/>
    </location>
</feature>
<keyword id="KW-0878">Amphibian defense peptide</keyword>
<keyword id="KW-0044">Antibiotic</keyword>
<keyword id="KW-0929">Antimicrobial</keyword>
<keyword id="KW-0903">Direct protein sequencing</keyword>
<keyword id="KW-0964">Secreted</keyword>
<proteinExistence type="evidence at protein level"/>
<comment type="function">
    <text>Shows a medium antibacterial activity against M.luteus, L.mesenteriodes and S.uberis.</text>
</comment>
<comment type="subcellular location">
    <subcellularLocation>
        <location>Secreted</location>
    </subcellularLocation>
</comment>
<comment type="tissue specificity">
    <text>Expressed by the skin dorsal glands.</text>
</comment>
<comment type="mass spectrometry"/>
<accession>P82031</accession>
<protein>
    <recommendedName>
        <fullName>Uperin-2.5</fullName>
    </recommendedName>
</protein>
<name>UPE25_UPEIN</name>
<evidence type="ECO:0000269" key="1">
    <source ref="1"/>
</evidence>
<sequence>GIVDFAKGVLGKIKNVLGI</sequence>
<organism>
    <name type="scientific">Uperoleia inundata</name>
    <name type="common">Floodplain toadlet</name>
    <dbReference type="NCBI Taxonomy" id="104953"/>
    <lineage>
        <taxon>Eukaryota</taxon>
        <taxon>Metazoa</taxon>
        <taxon>Chordata</taxon>
        <taxon>Craniata</taxon>
        <taxon>Vertebrata</taxon>
        <taxon>Euteleostomi</taxon>
        <taxon>Amphibia</taxon>
        <taxon>Batrachia</taxon>
        <taxon>Anura</taxon>
        <taxon>Neobatrachia</taxon>
        <taxon>Myobatrachoidea</taxon>
        <taxon>Myobatrachidae</taxon>
        <taxon>Myobatrachinae</taxon>
        <taxon>Uperoleia</taxon>
    </lineage>
</organism>
<reference key="1">
    <citation type="journal article" date="1996" name="Aust. J. Chem.">
        <title>Novel uperin peptides from the dorsal glands of the australian floodplain toadlet Uperoleia inundata.</title>
        <authorList>
            <person name="Bradford A.M."/>
            <person name="Raftery M.J."/>
            <person name="Bowie J.H."/>
            <person name="Tyler M.J."/>
            <person name="Wallace J.C."/>
            <person name="Adams G.W."/>
            <person name="Severini C."/>
        </authorList>
    </citation>
    <scope>PROTEIN SEQUENCE</scope>
    <scope>MASS SPECTROMETRY</scope>
    <source>
        <tissue>Skin secretion</tissue>
    </source>
</reference>
<dbReference type="GO" id="GO:0005576">
    <property type="term" value="C:extracellular region"/>
    <property type="evidence" value="ECO:0007669"/>
    <property type="project" value="UniProtKB-SubCell"/>
</dbReference>
<dbReference type="GO" id="GO:0042742">
    <property type="term" value="P:defense response to bacterium"/>
    <property type="evidence" value="ECO:0007669"/>
    <property type="project" value="UniProtKB-KW"/>
</dbReference>